<keyword id="KW-0025">Alternative splicing</keyword>
<keyword id="KW-0158">Chromosome</keyword>
<keyword id="KW-0963">Cytoplasm</keyword>
<keyword id="KW-0469">Meiosis</keyword>
<keyword id="KW-0539">Nucleus</keyword>
<keyword id="KW-1267">Proteomics identification</keyword>
<keyword id="KW-1185">Reference proteome</keyword>
<accession>Q8IZU0</accession>
<accession>Q0IJ68</accession>
<accession>Q8N7Z8</accession>
<reference key="1">
    <citation type="journal article" date="2002" name="Genomics">
        <title>A new gene family (FAM9) of low-copy repeats in Xp22.3 expressed exclusively in testis: implications for recombinations in this region.</title>
        <authorList>
            <person name="Martinez-Garay I."/>
            <person name="Jablonka S."/>
            <person name="Sutajova M."/>
            <person name="Steuernagel P."/>
            <person name="Gal A."/>
            <person name="Kutsche K."/>
        </authorList>
    </citation>
    <scope>NUCLEOTIDE SEQUENCE [MRNA] (ISOFORM 1)</scope>
    <scope>SUBCELLULAR LOCATION</scope>
</reference>
<reference key="2">
    <citation type="journal article" date="2004" name="Nat. Genet.">
        <title>Complete sequencing and characterization of 21,243 full-length human cDNAs.</title>
        <authorList>
            <person name="Ota T."/>
            <person name="Suzuki Y."/>
            <person name="Nishikawa T."/>
            <person name="Otsuki T."/>
            <person name="Sugiyama T."/>
            <person name="Irie R."/>
            <person name="Wakamatsu A."/>
            <person name="Hayashi K."/>
            <person name="Sato H."/>
            <person name="Nagai K."/>
            <person name="Kimura K."/>
            <person name="Makita H."/>
            <person name="Sekine M."/>
            <person name="Obayashi M."/>
            <person name="Nishi T."/>
            <person name="Shibahara T."/>
            <person name="Tanaka T."/>
            <person name="Ishii S."/>
            <person name="Yamamoto J."/>
            <person name="Saito K."/>
            <person name="Kawai Y."/>
            <person name="Isono Y."/>
            <person name="Nakamura Y."/>
            <person name="Nagahari K."/>
            <person name="Murakami K."/>
            <person name="Yasuda T."/>
            <person name="Iwayanagi T."/>
            <person name="Wagatsuma M."/>
            <person name="Shiratori A."/>
            <person name="Sudo H."/>
            <person name="Hosoiri T."/>
            <person name="Kaku Y."/>
            <person name="Kodaira H."/>
            <person name="Kondo H."/>
            <person name="Sugawara M."/>
            <person name="Takahashi M."/>
            <person name="Kanda K."/>
            <person name="Yokoi T."/>
            <person name="Furuya T."/>
            <person name="Kikkawa E."/>
            <person name="Omura Y."/>
            <person name="Abe K."/>
            <person name="Kamihara K."/>
            <person name="Katsuta N."/>
            <person name="Sato K."/>
            <person name="Tanikawa M."/>
            <person name="Yamazaki M."/>
            <person name="Ninomiya K."/>
            <person name="Ishibashi T."/>
            <person name="Yamashita H."/>
            <person name="Murakawa K."/>
            <person name="Fujimori K."/>
            <person name="Tanai H."/>
            <person name="Kimata M."/>
            <person name="Watanabe M."/>
            <person name="Hiraoka S."/>
            <person name="Chiba Y."/>
            <person name="Ishida S."/>
            <person name="Ono Y."/>
            <person name="Takiguchi S."/>
            <person name="Watanabe S."/>
            <person name="Yosida M."/>
            <person name="Hotuta T."/>
            <person name="Kusano J."/>
            <person name="Kanehori K."/>
            <person name="Takahashi-Fujii A."/>
            <person name="Hara H."/>
            <person name="Tanase T.-O."/>
            <person name="Nomura Y."/>
            <person name="Togiya S."/>
            <person name="Komai F."/>
            <person name="Hara R."/>
            <person name="Takeuchi K."/>
            <person name="Arita M."/>
            <person name="Imose N."/>
            <person name="Musashino K."/>
            <person name="Yuuki H."/>
            <person name="Oshima A."/>
            <person name="Sasaki N."/>
            <person name="Aotsuka S."/>
            <person name="Yoshikawa Y."/>
            <person name="Matsunawa H."/>
            <person name="Ichihara T."/>
            <person name="Shiohata N."/>
            <person name="Sano S."/>
            <person name="Moriya S."/>
            <person name="Momiyama H."/>
            <person name="Satoh N."/>
            <person name="Takami S."/>
            <person name="Terashima Y."/>
            <person name="Suzuki O."/>
            <person name="Nakagawa S."/>
            <person name="Senoh A."/>
            <person name="Mizoguchi H."/>
            <person name="Goto Y."/>
            <person name="Shimizu F."/>
            <person name="Wakebe H."/>
            <person name="Hishigaki H."/>
            <person name="Watanabe T."/>
            <person name="Sugiyama A."/>
            <person name="Takemoto M."/>
            <person name="Kawakami B."/>
            <person name="Yamazaki M."/>
            <person name="Watanabe K."/>
            <person name="Kumagai A."/>
            <person name="Itakura S."/>
            <person name="Fukuzumi Y."/>
            <person name="Fujimori Y."/>
            <person name="Komiyama M."/>
            <person name="Tashiro H."/>
            <person name="Tanigami A."/>
            <person name="Fujiwara T."/>
            <person name="Ono T."/>
            <person name="Yamada K."/>
            <person name="Fujii Y."/>
            <person name="Ozaki K."/>
            <person name="Hirao M."/>
            <person name="Ohmori Y."/>
            <person name="Kawabata A."/>
            <person name="Hikiji T."/>
            <person name="Kobatake N."/>
            <person name="Inagaki H."/>
            <person name="Ikema Y."/>
            <person name="Okamoto S."/>
            <person name="Okitani R."/>
            <person name="Kawakami T."/>
            <person name="Noguchi S."/>
            <person name="Itoh T."/>
            <person name="Shigeta K."/>
            <person name="Senba T."/>
            <person name="Matsumura K."/>
            <person name="Nakajima Y."/>
            <person name="Mizuno T."/>
            <person name="Morinaga M."/>
            <person name="Sasaki M."/>
            <person name="Togashi T."/>
            <person name="Oyama M."/>
            <person name="Hata H."/>
            <person name="Watanabe M."/>
            <person name="Komatsu T."/>
            <person name="Mizushima-Sugano J."/>
            <person name="Satoh T."/>
            <person name="Shirai Y."/>
            <person name="Takahashi Y."/>
            <person name="Nakagawa K."/>
            <person name="Okumura K."/>
            <person name="Nagase T."/>
            <person name="Nomura N."/>
            <person name="Kikuchi H."/>
            <person name="Masuho Y."/>
            <person name="Yamashita R."/>
            <person name="Nakai K."/>
            <person name="Yada T."/>
            <person name="Nakamura Y."/>
            <person name="Ohara O."/>
            <person name="Isogai T."/>
            <person name="Sugano S."/>
        </authorList>
    </citation>
    <scope>NUCLEOTIDE SEQUENCE [LARGE SCALE MRNA] (ISOFORM 2)</scope>
    <source>
        <tissue>Testis</tissue>
    </source>
</reference>
<reference key="3">
    <citation type="journal article" date="2005" name="Nature">
        <title>The DNA sequence of the human X chromosome.</title>
        <authorList>
            <person name="Ross M.T."/>
            <person name="Grafham D.V."/>
            <person name="Coffey A.J."/>
            <person name="Scherer S."/>
            <person name="McLay K."/>
            <person name="Muzny D."/>
            <person name="Platzer M."/>
            <person name="Howell G.R."/>
            <person name="Burrows C."/>
            <person name="Bird C.P."/>
            <person name="Frankish A."/>
            <person name="Lovell F.L."/>
            <person name="Howe K.L."/>
            <person name="Ashurst J.L."/>
            <person name="Fulton R.S."/>
            <person name="Sudbrak R."/>
            <person name="Wen G."/>
            <person name="Jones M.C."/>
            <person name="Hurles M.E."/>
            <person name="Andrews T.D."/>
            <person name="Scott C.E."/>
            <person name="Searle S."/>
            <person name="Ramser J."/>
            <person name="Whittaker A."/>
            <person name="Deadman R."/>
            <person name="Carter N.P."/>
            <person name="Hunt S.E."/>
            <person name="Chen R."/>
            <person name="Cree A."/>
            <person name="Gunaratne P."/>
            <person name="Havlak P."/>
            <person name="Hodgson A."/>
            <person name="Metzker M.L."/>
            <person name="Richards S."/>
            <person name="Scott G."/>
            <person name="Steffen D."/>
            <person name="Sodergren E."/>
            <person name="Wheeler D.A."/>
            <person name="Worley K.C."/>
            <person name="Ainscough R."/>
            <person name="Ambrose K.D."/>
            <person name="Ansari-Lari M.A."/>
            <person name="Aradhya S."/>
            <person name="Ashwell R.I."/>
            <person name="Babbage A.K."/>
            <person name="Bagguley C.L."/>
            <person name="Ballabio A."/>
            <person name="Banerjee R."/>
            <person name="Barker G.E."/>
            <person name="Barlow K.F."/>
            <person name="Barrett I.P."/>
            <person name="Bates K.N."/>
            <person name="Beare D.M."/>
            <person name="Beasley H."/>
            <person name="Beasley O."/>
            <person name="Beck A."/>
            <person name="Bethel G."/>
            <person name="Blechschmidt K."/>
            <person name="Brady N."/>
            <person name="Bray-Allen S."/>
            <person name="Bridgeman A.M."/>
            <person name="Brown A.J."/>
            <person name="Brown M.J."/>
            <person name="Bonnin D."/>
            <person name="Bruford E.A."/>
            <person name="Buhay C."/>
            <person name="Burch P."/>
            <person name="Burford D."/>
            <person name="Burgess J."/>
            <person name="Burrill W."/>
            <person name="Burton J."/>
            <person name="Bye J.M."/>
            <person name="Carder C."/>
            <person name="Carrel L."/>
            <person name="Chako J."/>
            <person name="Chapman J.C."/>
            <person name="Chavez D."/>
            <person name="Chen E."/>
            <person name="Chen G."/>
            <person name="Chen Y."/>
            <person name="Chen Z."/>
            <person name="Chinault C."/>
            <person name="Ciccodicola A."/>
            <person name="Clark S.Y."/>
            <person name="Clarke G."/>
            <person name="Clee C.M."/>
            <person name="Clegg S."/>
            <person name="Clerc-Blankenburg K."/>
            <person name="Clifford K."/>
            <person name="Cobley V."/>
            <person name="Cole C.G."/>
            <person name="Conquer J.S."/>
            <person name="Corby N."/>
            <person name="Connor R.E."/>
            <person name="David R."/>
            <person name="Davies J."/>
            <person name="Davis C."/>
            <person name="Davis J."/>
            <person name="Delgado O."/>
            <person name="Deshazo D."/>
            <person name="Dhami P."/>
            <person name="Ding Y."/>
            <person name="Dinh H."/>
            <person name="Dodsworth S."/>
            <person name="Draper H."/>
            <person name="Dugan-Rocha S."/>
            <person name="Dunham A."/>
            <person name="Dunn M."/>
            <person name="Durbin K.J."/>
            <person name="Dutta I."/>
            <person name="Eades T."/>
            <person name="Ellwood M."/>
            <person name="Emery-Cohen A."/>
            <person name="Errington H."/>
            <person name="Evans K.L."/>
            <person name="Faulkner L."/>
            <person name="Francis F."/>
            <person name="Frankland J."/>
            <person name="Fraser A.E."/>
            <person name="Galgoczy P."/>
            <person name="Gilbert J."/>
            <person name="Gill R."/>
            <person name="Gloeckner G."/>
            <person name="Gregory S.G."/>
            <person name="Gribble S."/>
            <person name="Griffiths C."/>
            <person name="Grocock R."/>
            <person name="Gu Y."/>
            <person name="Gwilliam R."/>
            <person name="Hamilton C."/>
            <person name="Hart E.A."/>
            <person name="Hawes A."/>
            <person name="Heath P.D."/>
            <person name="Heitmann K."/>
            <person name="Hennig S."/>
            <person name="Hernandez J."/>
            <person name="Hinzmann B."/>
            <person name="Ho S."/>
            <person name="Hoffs M."/>
            <person name="Howden P.J."/>
            <person name="Huckle E.J."/>
            <person name="Hume J."/>
            <person name="Hunt P.J."/>
            <person name="Hunt A.R."/>
            <person name="Isherwood J."/>
            <person name="Jacob L."/>
            <person name="Johnson D."/>
            <person name="Jones S."/>
            <person name="de Jong P.J."/>
            <person name="Joseph S.S."/>
            <person name="Keenan S."/>
            <person name="Kelly S."/>
            <person name="Kershaw J.K."/>
            <person name="Khan Z."/>
            <person name="Kioschis P."/>
            <person name="Klages S."/>
            <person name="Knights A.J."/>
            <person name="Kosiura A."/>
            <person name="Kovar-Smith C."/>
            <person name="Laird G.K."/>
            <person name="Langford C."/>
            <person name="Lawlor S."/>
            <person name="Leversha M."/>
            <person name="Lewis L."/>
            <person name="Liu W."/>
            <person name="Lloyd C."/>
            <person name="Lloyd D.M."/>
            <person name="Loulseged H."/>
            <person name="Loveland J.E."/>
            <person name="Lovell J.D."/>
            <person name="Lozado R."/>
            <person name="Lu J."/>
            <person name="Lyne R."/>
            <person name="Ma J."/>
            <person name="Maheshwari M."/>
            <person name="Matthews L.H."/>
            <person name="McDowall J."/>
            <person name="McLaren S."/>
            <person name="McMurray A."/>
            <person name="Meidl P."/>
            <person name="Meitinger T."/>
            <person name="Milne S."/>
            <person name="Miner G."/>
            <person name="Mistry S.L."/>
            <person name="Morgan M."/>
            <person name="Morris S."/>
            <person name="Mueller I."/>
            <person name="Mullikin J.C."/>
            <person name="Nguyen N."/>
            <person name="Nordsiek G."/>
            <person name="Nyakatura G."/>
            <person name="O'dell C.N."/>
            <person name="Okwuonu G."/>
            <person name="Palmer S."/>
            <person name="Pandian R."/>
            <person name="Parker D."/>
            <person name="Parrish J."/>
            <person name="Pasternak S."/>
            <person name="Patel D."/>
            <person name="Pearce A.V."/>
            <person name="Pearson D.M."/>
            <person name="Pelan S.E."/>
            <person name="Perez L."/>
            <person name="Porter K.M."/>
            <person name="Ramsey Y."/>
            <person name="Reichwald K."/>
            <person name="Rhodes S."/>
            <person name="Ridler K.A."/>
            <person name="Schlessinger D."/>
            <person name="Schueler M.G."/>
            <person name="Sehra H.K."/>
            <person name="Shaw-Smith C."/>
            <person name="Shen H."/>
            <person name="Sheridan E.M."/>
            <person name="Shownkeen R."/>
            <person name="Skuce C.D."/>
            <person name="Smith M.L."/>
            <person name="Sotheran E.C."/>
            <person name="Steingruber H.E."/>
            <person name="Steward C.A."/>
            <person name="Storey R."/>
            <person name="Swann R.M."/>
            <person name="Swarbreck D."/>
            <person name="Tabor P.E."/>
            <person name="Taudien S."/>
            <person name="Taylor T."/>
            <person name="Teague B."/>
            <person name="Thomas K."/>
            <person name="Thorpe A."/>
            <person name="Timms K."/>
            <person name="Tracey A."/>
            <person name="Trevanion S."/>
            <person name="Tromans A.C."/>
            <person name="d'Urso M."/>
            <person name="Verduzco D."/>
            <person name="Villasana D."/>
            <person name="Waldron L."/>
            <person name="Wall M."/>
            <person name="Wang Q."/>
            <person name="Warren J."/>
            <person name="Warry G.L."/>
            <person name="Wei X."/>
            <person name="West A."/>
            <person name="Whitehead S.L."/>
            <person name="Whiteley M.N."/>
            <person name="Wilkinson J.E."/>
            <person name="Willey D.L."/>
            <person name="Williams G."/>
            <person name="Williams L."/>
            <person name="Williamson A."/>
            <person name="Williamson H."/>
            <person name="Wilming L."/>
            <person name="Woodmansey R.L."/>
            <person name="Wray P.W."/>
            <person name="Yen J."/>
            <person name="Zhang J."/>
            <person name="Zhou J."/>
            <person name="Zoghbi H."/>
            <person name="Zorilla S."/>
            <person name="Buck D."/>
            <person name="Reinhardt R."/>
            <person name="Poustka A."/>
            <person name="Rosenthal A."/>
            <person name="Lehrach H."/>
            <person name="Meindl A."/>
            <person name="Minx P.J."/>
            <person name="Hillier L.W."/>
            <person name="Willard H.F."/>
            <person name="Wilson R.K."/>
            <person name="Waterston R.H."/>
            <person name="Rice C.M."/>
            <person name="Vaudin M."/>
            <person name="Coulson A."/>
            <person name="Nelson D.L."/>
            <person name="Weinstock G."/>
            <person name="Sulston J.E."/>
            <person name="Durbin R.M."/>
            <person name="Hubbard T."/>
            <person name="Gibbs R.A."/>
            <person name="Beck S."/>
            <person name="Rogers J."/>
            <person name="Bentley D.R."/>
        </authorList>
    </citation>
    <scope>NUCLEOTIDE SEQUENCE [LARGE SCALE GENOMIC DNA]</scope>
</reference>
<reference key="4">
    <citation type="submission" date="2005-07" db="EMBL/GenBank/DDBJ databases">
        <authorList>
            <person name="Mural R.J."/>
            <person name="Istrail S."/>
            <person name="Sutton G."/>
            <person name="Florea L."/>
            <person name="Halpern A.L."/>
            <person name="Mobarry C.M."/>
            <person name="Lippert R."/>
            <person name="Walenz B."/>
            <person name="Shatkay H."/>
            <person name="Dew I."/>
            <person name="Miller J.R."/>
            <person name="Flanigan M.J."/>
            <person name="Edwards N.J."/>
            <person name="Bolanos R."/>
            <person name="Fasulo D."/>
            <person name="Halldorsson B.V."/>
            <person name="Hannenhalli S."/>
            <person name="Turner R."/>
            <person name="Yooseph S."/>
            <person name="Lu F."/>
            <person name="Nusskern D.R."/>
            <person name="Shue B.C."/>
            <person name="Zheng X.H."/>
            <person name="Zhong F."/>
            <person name="Delcher A.L."/>
            <person name="Huson D.H."/>
            <person name="Kravitz S.A."/>
            <person name="Mouchard L."/>
            <person name="Reinert K."/>
            <person name="Remington K.A."/>
            <person name="Clark A.G."/>
            <person name="Waterman M.S."/>
            <person name="Eichler E.E."/>
            <person name="Adams M.D."/>
            <person name="Hunkapiller M.W."/>
            <person name="Myers E.W."/>
            <person name="Venter J.C."/>
        </authorList>
    </citation>
    <scope>NUCLEOTIDE SEQUENCE [LARGE SCALE GENOMIC DNA]</scope>
</reference>
<reference key="5">
    <citation type="journal article" date="2004" name="Genome Res.">
        <title>The status, quality, and expansion of the NIH full-length cDNA project: the Mammalian Gene Collection (MGC).</title>
        <authorList>
            <consortium name="The MGC Project Team"/>
        </authorList>
    </citation>
    <scope>NUCLEOTIDE SEQUENCE [LARGE SCALE MRNA] (ISOFORM 1)</scope>
</reference>
<reference key="6">
    <citation type="journal article" date="2021" name="PLoS ONE">
        <title>FAM9B serves as a novel meiosis-related protein localized in meiotic chromosome cores and is associated with human gametogenesis.</title>
        <authorList>
            <person name="Zhuang X.J."/>
            <person name="Feng X."/>
            <person name="Tang W.H."/>
            <person name="Zhu J.L."/>
            <person name="Li M."/>
            <person name="Li J.S."/>
            <person name="Zheng X.Y."/>
            <person name="Li R."/>
            <person name="Liu P."/>
            <person name="Qiao J."/>
        </authorList>
    </citation>
    <scope>FUNCTION</scope>
    <scope>SUBCELLULAR LOCATION</scope>
    <scope>TISSUE SPECIFICITY</scope>
    <scope>DEVELOPMENTAL STAGE</scope>
</reference>
<proteinExistence type="evidence at protein level"/>
<organism>
    <name type="scientific">Homo sapiens</name>
    <name type="common">Human</name>
    <dbReference type="NCBI Taxonomy" id="9606"/>
    <lineage>
        <taxon>Eukaryota</taxon>
        <taxon>Metazoa</taxon>
        <taxon>Chordata</taxon>
        <taxon>Craniata</taxon>
        <taxon>Vertebrata</taxon>
        <taxon>Euteleostomi</taxon>
        <taxon>Mammalia</taxon>
        <taxon>Eutheria</taxon>
        <taxon>Euarchontoglires</taxon>
        <taxon>Primates</taxon>
        <taxon>Haplorrhini</taxon>
        <taxon>Catarrhini</taxon>
        <taxon>Hominidae</taxon>
        <taxon>Homo</taxon>
    </lineage>
</organism>
<dbReference type="EMBL" id="AF494344">
    <property type="protein sequence ID" value="AAN07163.1"/>
    <property type="molecule type" value="mRNA"/>
</dbReference>
<dbReference type="EMBL" id="AK097501">
    <property type="protein sequence ID" value="BAC05078.1"/>
    <property type="molecule type" value="mRNA"/>
</dbReference>
<dbReference type="EMBL" id="AC074281">
    <property type="status" value="NOT_ANNOTATED_CDS"/>
    <property type="molecule type" value="Genomic_DNA"/>
</dbReference>
<dbReference type="EMBL" id="AC119567">
    <property type="status" value="NOT_ANNOTATED_CDS"/>
    <property type="molecule type" value="Genomic_DNA"/>
</dbReference>
<dbReference type="EMBL" id="AC119618">
    <property type="status" value="NOT_ANNOTATED_CDS"/>
    <property type="molecule type" value="Genomic_DNA"/>
</dbReference>
<dbReference type="EMBL" id="CH471074">
    <property type="protein sequence ID" value="EAW98763.1"/>
    <property type="molecule type" value="Genomic_DNA"/>
</dbReference>
<dbReference type="EMBL" id="BC120955">
    <property type="protein sequence ID" value="AAI20956.1"/>
    <property type="molecule type" value="mRNA"/>
</dbReference>
<dbReference type="EMBL" id="BC120956">
    <property type="protein sequence ID" value="AAI20957.1"/>
    <property type="molecule type" value="mRNA"/>
</dbReference>
<dbReference type="CCDS" id="CCDS14132.1">
    <molecule id="Q8IZU0-1"/>
</dbReference>
<dbReference type="RefSeq" id="NP_995321.1">
    <molecule id="Q8IZU0-1"/>
    <property type="nucleotide sequence ID" value="NM_205849.3"/>
</dbReference>
<dbReference type="RefSeq" id="XP_011543766.1">
    <property type="nucleotide sequence ID" value="XM_011545464.2"/>
</dbReference>
<dbReference type="SMR" id="Q8IZU0"/>
<dbReference type="BioGRID" id="128131">
    <property type="interactions" value="167"/>
</dbReference>
<dbReference type="FunCoup" id="Q8IZU0">
    <property type="interactions" value="20"/>
</dbReference>
<dbReference type="IntAct" id="Q8IZU0">
    <property type="interactions" value="162"/>
</dbReference>
<dbReference type="STRING" id="9606.ENSP00000318716"/>
<dbReference type="MoonDB" id="Q8IZU0">
    <property type="type" value="Predicted"/>
</dbReference>
<dbReference type="BioMuta" id="FAM9B"/>
<dbReference type="DMDM" id="29336758"/>
<dbReference type="MassIVE" id="Q8IZU0"/>
<dbReference type="PaxDb" id="9606-ENSP00000318716"/>
<dbReference type="PeptideAtlas" id="Q8IZU0"/>
<dbReference type="Antibodypedia" id="23614">
    <property type="antibodies" value="25 antibodies from 13 providers"/>
</dbReference>
<dbReference type="DNASU" id="171483"/>
<dbReference type="Ensembl" id="ENST00000327220.10">
    <molecule id="Q8IZU0-1"/>
    <property type="protein sequence ID" value="ENSP00000318716.5"/>
    <property type="gene ID" value="ENSG00000177138.17"/>
</dbReference>
<dbReference type="Ensembl" id="ENST00000362066.7">
    <molecule id="Q8IZU0-2"/>
    <property type="protein sequence ID" value="ENSP00000354770.3"/>
    <property type="gene ID" value="ENSG00000177138.17"/>
</dbReference>
<dbReference type="Ensembl" id="ENST00000428477.1">
    <molecule id="Q8IZU0-1"/>
    <property type="protein sequence ID" value="ENSP00000412606.1"/>
    <property type="gene ID" value="ENSG00000177138.17"/>
</dbReference>
<dbReference type="Ensembl" id="ENST00000472522.6">
    <molecule id="Q8IZU0-1"/>
    <property type="protein sequence ID" value="ENSP00000431456.2"/>
    <property type="gene ID" value="ENSG00000177138.17"/>
</dbReference>
<dbReference type="Ensembl" id="ENST00000651278.1">
    <molecule id="Q8IZU0-1"/>
    <property type="protein sequence ID" value="ENSP00000498495.1"/>
    <property type="gene ID" value="ENSG00000177138.17"/>
</dbReference>
<dbReference type="GeneID" id="171483"/>
<dbReference type="KEGG" id="hsa:171483"/>
<dbReference type="MANE-Select" id="ENST00000327220.10">
    <property type="protein sequence ID" value="ENSP00000318716.5"/>
    <property type="RefSeq nucleotide sequence ID" value="NM_205849.3"/>
    <property type="RefSeq protein sequence ID" value="NP_995321.1"/>
</dbReference>
<dbReference type="UCSC" id="uc004csh.4">
    <molecule id="Q8IZU0-1"/>
    <property type="organism name" value="human"/>
</dbReference>
<dbReference type="AGR" id="HGNC:18404"/>
<dbReference type="CTD" id="171483"/>
<dbReference type="DisGeNET" id="171483"/>
<dbReference type="GeneCards" id="FAM9B"/>
<dbReference type="HGNC" id="HGNC:18404">
    <property type="gene designation" value="FAM9B"/>
</dbReference>
<dbReference type="HPA" id="ENSG00000177138">
    <property type="expression patterns" value="Tissue enhanced (liver, testis)"/>
</dbReference>
<dbReference type="MIM" id="300478">
    <property type="type" value="gene"/>
</dbReference>
<dbReference type="neXtProt" id="NX_Q8IZU0"/>
<dbReference type="OpenTargets" id="ENSG00000177138"/>
<dbReference type="PharmGKB" id="PA27993"/>
<dbReference type="VEuPathDB" id="HostDB:ENSG00000177138"/>
<dbReference type="eggNOG" id="ENOG502TD36">
    <property type="taxonomic scope" value="Eukaryota"/>
</dbReference>
<dbReference type="GeneTree" id="ENSGT00390000000062"/>
<dbReference type="HOGENOM" id="CLU_083208_0_0_1"/>
<dbReference type="InParanoid" id="Q8IZU0"/>
<dbReference type="OMA" id="DEYMGTN"/>
<dbReference type="OrthoDB" id="9539598at2759"/>
<dbReference type="PAN-GO" id="Q8IZU0">
    <property type="GO annotations" value="3 GO annotations based on evolutionary models"/>
</dbReference>
<dbReference type="PhylomeDB" id="Q8IZU0"/>
<dbReference type="TreeFam" id="TF328876"/>
<dbReference type="PathwayCommons" id="Q8IZU0"/>
<dbReference type="SignaLink" id="Q8IZU0"/>
<dbReference type="BioGRID-ORCS" id="171483">
    <property type="hits" value="14 hits in 758 CRISPR screens"/>
</dbReference>
<dbReference type="CD-CODE" id="91857CE7">
    <property type="entry name" value="Nucleolus"/>
</dbReference>
<dbReference type="ChiTaRS" id="FAM9B">
    <property type="organism name" value="human"/>
</dbReference>
<dbReference type="GenomeRNAi" id="171483"/>
<dbReference type="Pharos" id="Q8IZU0">
    <property type="development level" value="Tdark"/>
</dbReference>
<dbReference type="PRO" id="PR:Q8IZU0"/>
<dbReference type="Proteomes" id="UP000005640">
    <property type="component" value="Chromosome X"/>
</dbReference>
<dbReference type="RNAct" id="Q8IZU0">
    <property type="molecule type" value="protein"/>
</dbReference>
<dbReference type="Bgee" id="ENSG00000177138">
    <property type="expression patterns" value="Expressed in male germ line stem cell (sensu Vertebrata) in testis and 66 other cell types or tissues"/>
</dbReference>
<dbReference type="ExpressionAtlas" id="Q8IZU0">
    <property type="expression patterns" value="baseline and differential"/>
</dbReference>
<dbReference type="GO" id="GO:0005694">
    <property type="term" value="C:chromosome"/>
    <property type="evidence" value="ECO:0000314"/>
    <property type="project" value="UniProtKB"/>
</dbReference>
<dbReference type="GO" id="GO:0005737">
    <property type="term" value="C:cytoplasm"/>
    <property type="evidence" value="ECO:0000314"/>
    <property type="project" value="UniProtKB"/>
</dbReference>
<dbReference type="GO" id="GO:0005654">
    <property type="term" value="C:nucleoplasm"/>
    <property type="evidence" value="ECO:0000314"/>
    <property type="project" value="HPA"/>
</dbReference>
<dbReference type="GO" id="GO:0005634">
    <property type="term" value="C:nucleus"/>
    <property type="evidence" value="ECO:0000314"/>
    <property type="project" value="UniProtKB"/>
</dbReference>
<dbReference type="GO" id="GO:0000795">
    <property type="term" value="C:synaptonemal complex"/>
    <property type="evidence" value="ECO:0000318"/>
    <property type="project" value="GO_Central"/>
</dbReference>
<dbReference type="GO" id="GO:0051321">
    <property type="term" value="P:meiotic cell cycle"/>
    <property type="evidence" value="ECO:0000318"/>
    <property type="project" value="GO_Central"/>
</dbReference>
<dbReference type="GO" id="GO:0007286">
    <property type="term" value="P:spermatid development"/>
    <property type="evidence" value="ECO:0000318"/>
    <property type="project" value="GO_Central"/>
</dbReference>
<dbReference type="InterPro" id="IPR051443">
    <property type="entry name" value="XLR/SYCP3"/>
</dbReference>
<dbReference type="InterPro" id="IPR006888">
    <property type="entry name" value="XLR/SYCP3/FAM9_dom"/>
</dbReference>
<dbReference type="PANTHER" id="PTHR19368:SF2">
    <property type="entry name" value="PROTEIN FAM9B"/>
    <property type="match status" value="1"/>
</dbReference>
<dbReference type="PANTHER" id="PTHR19368">
    <property type="entry name" value="XLR/SCP3/FAM9"/>
    <property type="match status" value="1"/>
</dbReference>
<dbReference type="Pfam" id="PF04803">
    <property type="entry name" value="Cor1"/>
    <property type="match status" value="1"/>
</dbReference>
<comment type="function">
    <text evidence="3">May play a role in meiosis.</text>
</comment>
<comment type="interaction">
    <interactant intactId="EBI-10175124">
        <id>Q8IZU0</id>
    </interactant>
    <interactant intactId="EBI-2602396">
        <id>Q9ULW3</id>
        <label>ABT1</label>
    </interactant>
    <organismsDiffer>false</organismsDiffer>
    <experiments>3</experiments>
</comment>
<comment type="interaction">
    <interactant intactId="EBI-10175124">
        <id>Q8IZU0</id>
    </interactant>
    <interactant intactId="EBI-2876112">
        <id>Q8N2N9</id>
        <label>ANKRD36B</label>
    </interactant>
    <organismsDiffer>false</organismsDiffer>
    <experiments>3</experiments>
</comment>
<comment type="interaction">
    <interactant intactId="EBI-10175124">
        <id>Q8IZU0</id>
    </interactant>
    <interactant intactId="EBI-541426">
        <id>Q9BXS5</id>
        <label>AP1M1</label>
    </interactant>
    <organismsDiffer>false</organismsDiffer>
    <experiments>3</experiments>
</comment>
<comment type="interaction">
    <interactant intactId="EBI-10175124">
        <id>Q8IZU0</id>
    </interactant>
    <interactant intactId="EBI-6425205">
        <id>Q9NWX5</id>
        <label>ASB6</label>
    </interactant>
    <organismsDiffer>false</organismsDiffer>
    <experiments>3</experiments>
</comment>
<comment type="interaction">
    <interactant intactId="EBI-10175124">
        <id>Q8IZU0</id>
    </interactant>
    <interactant intactId="EBI-765623">
        <id>P17544</id>
        <label>ATF7</label>
    </interactant>
    <organismsDiffer>false</organismsDiffer>
    <experiments>3</experiments>
</comment>
<comment type="interaction">
    <interactant intactId="EBI-10175124">
        <id>Q8IZU0</id>
    </interactant>
    <interactant intactId="EBI-448665">
        <id>Q9NWT8</id>
        <label>AURKAIP1</label>
    </interactant>
    <organismsDiffer>false</organismsDiffer>
    <experiments>3</experiments>
</comment>
<comment type="interaction">
    <interactant intactId="EBI-10175124">
        <id>Q8IZU0</id>
    </interactant>
    <interactant intactId="EBI-347552">
        <id>P46379</id>
        <label>BAG6</label>
    </interactant>
    <organismsDiffer>false</organismsDiffer>
    <experiments>3</experiments>
</comment>
<comment type="interaction">
    <interactant intactId="EBI-10175124">
        <id>Q8IZU0</id>
    </interactant>
    <interactant intactId="EBI-473181">
        <id>Q99728</id>
        <label>BARD1</label>
    </interactant>
    <organismsDiffer>false</organismsDiffer>
    <experiments>3</experiments>
</comment>
<comment type="interaction">
    <interactant intactId="EBI-10175124">
        <id>Q8IZU0</id>
    </interactant>
    <interactant intactId="EBI-1003550">
        <id>Q16548</id>
        <label>BCL2A1</label>
    </interactant>
    <organismsDiffer>false</organismsDiffer>
    <experiments>3</experiments>
</comment>
<comment type="interaction">
    <interactant intactId="EBI-10175124">
        <id>Q8IZU0</id>
    </interactant>
    <interactant intactId="EBI-10242927">
        <id>Q53XK0</id>
        <label>BET1</label>
    </interactant>
    <organismsDiffer>false</organismsDiffer>
    <experiments>3</experiments>
</comment>
<comment type="interaction">
    <interactant intactId="EBI-10175124">
        <id>Q8IZU0</id>
    </interactant>
    <interactant intactId="EBI-465872">
        <id>Q6QNY1</id>
        <label>BLOC1S2</label>
    </interactant>
    <organismsDiffer>false</organismsDiffer>
    <experiments>3</experiments>
</comment>
<comment type="interaction">
    <interactant intactId="EBI-10175124">
        <id>Q8IZU0</id>
    </interactant>
    <interactant intactId="EBI-741210">
        <id>Q0VDD7</id>
        <label>BRME1</label>
    </interactant>
    <organismsDiffer>false</organismsDiffer>
    <experiments>3</experiments>
</comment>
<comment type="interaction">
    <interactant intactId="EBI-10175124">
        <id>Q8IZU0</id>
    </interactant>
    <interactant intactId="EBI-358049">
        <id>Q13895</id>
        <label>BYSL</label>
    </interactant>
    <organismsDiffer>false</organismsDiffer>
    <experiments>5</experiments>
</comment>
<comment type="interaction">
    <interactant intactId="EBI-10175124">
        <id>Q8IZU0</id>
    </interactant>
    <interactant intactId="EBI-715389">
        <id>Q9H7E9</id>
        <label>C8orf33</label>
    </interactant>
    <organismsDiffer>false</organismsDiffer>
    <experiments>3</experiments>
</comment>
<comment type="interaction">
    <interactant intactId="EBI-10175124">
        <id>Q8IZU0</id>
    </interactant>
    <interactant intactId="EBI-10180690">
        <id>Q9ULU8-4</id>
        <label>CADPS</label>
    </interactant>
    <organismsDiffer>false</organismsDiffer>
    <experiments>3</experiments>
</comment>
<comment type="interaction">
    <interactant intactId="EBI-10175124">
        <id>Q8IZU0</id>
    </interactant>
    <interactant intactId="EBI-711501">
        <id>Q9BWC9</id>
        <label>CCDC106</label>
    </interactant>
    <organismsDiffer>false</organismsDiffer>
    <experiments>8</experiments>
</comment>
<comment type="interaction">
    <interactant intactId="EBI-10175124">
        <id>Q8IZU0</id>
    </interactant>
    <interactant intactId="EBI-744311">
        <id>Q8IYX3</id>
        <label>CCDC116</label>
    </interactant>
    <organismsDiffer>false</organismsDiffer>
    <experiments>3</experiments>
</comment>
<comment type="interaction">
    <interactant intactId="EBI-10175124">
        <id>Q8IZU0</id>
    </interactant>
    <interactant intactId="EBI-10238351">
        <id>Q9NVL8</id>
        <label>CCDC198</label>
    </interactant>
    <organismsDiffer>false</organismsDiffer>
    <experiments>3</experiments>
</comment>
<comment type="interaction">
    <interactant intactId="EBI-10175124">
        <id>Q8IZU0</id>
    </interactant>
    <interactant intactId="EBI-6873045">
        <id>Q6NSX1</id>
        <label>CCDC70</label>
    </interactant>
    <organismsDiffer>false</organismsDiffer>
    <experiments>3</experiments>
</comment>
<comment type="interaction">
    <interactant intactId="EBI-10175124">
        <id>Q8IZU0</id>
    </interactant>
    <interactant intactId="EBI-396137">
        <id>Q9UJX2</id>
        <label>CDC23</label>
    </interactant>
    <organismsDiffer>false</organismsDiffer>
    <experiments>3</experiments>
</comment>
<comment type="interaction">
    <interactant intactId="EBI-10175124">
        <id>Q8IZU0</id>
    </interactant>
    <interactant intactId="EBI-295634">
        <id>Q16543</id>
        <label>CDC37</label>
    </interactant>
    <organismsDiffer>false</organismsDiffer>
    <experiments>3</experiments>
</comment>
<comment type="interaction">
    <interactant intactId="EBI-10175124">
        <id>Q8IZU0</id>
    </interactant>
    <interactant intactId="EBI-744665">
        <id>Q9H3Q1</id>
        <label>CDC42EP4</label>
    </interactant>
    <organismsDiffer>false</organismsDiffer>
    <experiments>5</experiments>
</comment>
<comment type="interaction">
    <interactant intactId="EBI-10175124">
        <id>Q8IZU0</id>
    </interactant>
    <interactant intactId="EBI-5278764">
        <id>Q96GN5</id>
        <label>CDCA7L</label>
    </interactant>
    <organismsDiffer>false</organismsDiffer>
    <experiments>3</experiments>
</comment>
<comment type="interaction">
    <interactant intactId="EBI-10175124">
        <id>Q8IZU0</id>
    </interactant>
    <interactant intactId="EBI-8467109">
        <id>Q8N0S6</id>
        <label>CENPL</label>
    </interactant>
    <organismsDiffer>false</organismsDiffer>
    <experiments>3</experiments>
</comment>
<comment type="interaction">
    <interactant intactId="EBI-10175124">
        <id>Q8IZU0</id>
    </interactant>
    <interactant intactId="EBI-10181988">
        <id>Q8IYX8-2</id>
        <label>CEP57L1</label>
    </interactant>
    <organismsDiffer>false</organismsDiffer>
    <experiments>3</experiments>
</comment>
<comment type="interaction">
    <interactant intactId="EBI-10175124">
        <id>Q8IZU0</id>
    </interactant>
    <interactant intactId="EBI-372775">
        <id>Q96GE4</id>
        <label>CEP95</label>
    </interactant>
    <organismsDiffer>false</organismsDiffer>
    <experiments>4</experiments>
</comment>
<comment type="interaction">
    <interactant intactId="EBI-10175124">
        <id>Q8IZU0</id>
    </interactant>
    <interactant intactId="EBI-2795492">
        <id>Q9NRG0</id>
        <label>CHRAC1</label>
    </interactant>
    <organismsDiffer>false</organismsDiffer>
    <experiments>7</experiments>
</comment>
<comment type="interaction">
    <interactant intactId="EBI-10175124">
        <id>Q8IZU0</id>
    </interactant>
    <interactant intactId="EBI-10206780">
        <id>P35523</id>
        <label>CLCN1</label>
    </interactant>
    <organismsDiffer>false</organismsDiffer>
    <experiments>3</experiments>
</comment>
<comment type="interaction">
    <interactant intactId="EBI-10175124">
        <id>Q8IZU0</id>
    </interactant>
    <interactant intactId="EBI-10318410">
        <id>Q9P218-2</id>
        <label>COL20A1</label>
    </interactant>
    <organismsDiffer>false</organismsDiffer>
    <experiments>3</experiments>
</comment>
<comment type="interaction">
    <interactant intactId="EBI-10175124">
        <id>Q8IZU0</id>
    </interactant>
    <interactant intactId="EBI-719186">
        <id>O75534</id>
        <label>CSDE1</label>
    </interactant>
    <organismsDiffer>false</organismsDiffer>
    <experiments>3</experiments>
</comment>
<comment type="interaction">
    <interactant intactId="EBI-10175124">
        <id>Q8IZU0</id>
    </interactant>
    <interactant intactId="EBI-5453285">
        <id>Q2TBE0</id>
        <label>CWF19L2</label>
    </interactant>
    <organismsDiffer>false</organismsDiffer>
    <experiments>3</experiments>
</comment>
<comment type="interaction">
    <interactant intactId="EBI-10175124">
        <id>Q8IZU0</id>
    </interactant>
    <interactant intactId="EBI-77154">
        <id>Q9UIK4</id>
        <label>DAPK2</label>
    </interactant>
    <organismsDiffer>false</organismsDiffer>
    <experiments>4</experiments>
</comment>
<comment type="interaction">
    <interactant intactId="EBI-10175124">
        <id>Q8IZU0</id>
    </interactant>
    <interactant intactId="EBI-77321">
        <id>Q9UER7</id>
        <label>DAXX</label>
    </interactant>
    <organismsDiffer>false</organismsDiffer>
    <experiments>4</experiments>
</comment>
<comment type="interaction">
    <interactant intactId="EBI-10175124">
        <id>Q8IZU0</id>
    </interactant>
    <interactant intactId="EBI-10307465">
        <id>Q9H6A0</id>
        <label>DENND2D</label>
    </interactant>
    <organismsDiffer>false</organismsDiffer>
    <experiments>3</experiments>
</comment>
<comment type="interaction">
    <interactant intactId="EBI-10175124">
        <id>Q8IZU0</id>
    </interactant>
    <interactant intactId="EBI-16436767">
        <id>A0A0S2Z3T7</id>
        <label>DGUOK</label>
    </interactant>
    <organismsDiffer>false</organismsDiffer>
    <experiments>4</experiments>
</comment>
<comment type="interaction">
    <interactant intactId="EBI-10175124">
        <id>Q8IZU0</id>
    </interactant>
    <interactant intactId="EBI-10329228">
        <id>Q9Y5T4</id>
        <label>DNAJC15</label>
    </interactant>
    <organismsDiffer>false</organismsDiffer>
    <experiments>3</experiments>
</comment>
<comment type="interaction">
    <interactant intactId="EBI-10175124">
        <id>Q8IZU0</id>
    </interactant>
    <interactant intactId="EBI-10286235">
        <id>Q96FY5</id>
        <label>DNAJC4</label>
    </interactant>
    <organismsDiffer>false</organismsDiffer>
    <experiments>3</experiments>
</comment>
<comment type="interaction">
    <interactant intactId="EBI-10175124">
        <id>Q8IZU0</id>
    </interactant>
    <interactant intactId="EBI-10249955">
        <id>Q6IB29</id>
        <label>EBNA1BP2</label>
    </interactant>
    <organismsDiffer>false</organismsDiffer>
    <experiments>3</experiments>
</comment>
<comment type="interaction">
    <interactant intactId="EBI-10175124">
        <id>Q8IZU0</id>
    </interactant>
    <interactant intactId="EBI-1048111">
        <id>Q99848</id>
        <label>EBNA1BP2</label>
    </interactant>
    <organismsDiffer>false</organismsDiffer>
    <experiments>5</experiments>
</comment>
<comment type="interaction">
    <interactant intactId="EBI-10175124">
        <id>Q8IZU0</id>
    </interactant>
    <interactant intactId="EBI-711968">
        <id>Q13011</id>
        <label>ECH1</label>
    </interactant>
    <organismsDiffer>false</organismsDiffer>
    <experiments>3</experiments>
</comment>
<comment type="interaction">
    <interactant intactId="EBI-10175124">
        <id>Q8IZU0</id>
    </interactant>
    <interactant intactId="EBI-366632">
        <id>O75821</id>
        <label>EIF3G</label>
    </interactant>
    <organismsDiffer>false</organismsDiffer>
    <experiments>3</experiments>
</comment>
<comment type="interaction">
    <interactant intactId="EBI-10175124">
        <id>Q8IZU0</id>
    </interactant>
    <interactant intactId="EBI-742350">
        <id>Q14241</id>
        <label>ELOA</label>
    </interactant>
    <organismsDiffer>false</organismsDiffer>
    <experiments>3</experiments>
</comment>
<comment type="interaction">
    <interactant intactId="EBI-10175124">
        <id>Q8IZU0</id>
    </interactant>
    <interactant intactId="EBI-719941">
        <id>Q3B820</id>
        <label>FAM161A</label>
    </interactant>
    <organismsDiffer>false</organismsDiffer>
    <experiments>3</experiments>
</comment>
<comment type="interaction">
    <interactant intactId="EBI-10175124">
        <id>Q8IZU0</id>
    </interactant>
    <interactant intactId="EBI-8468186">
        <id>Q8IZU1</id>
        <label>FAM9A</label>
    </interactant>
    <organismsDiffer>false</organismsDiffer>
    <experiments>5</experiments>
</comment>
<comment type="interaction">
    <interactant intactId="EBI-10175124">
        <id>Q8IZU0</id>
    </interactant>
    <interactant intactId="EBI-10234819">
        <id>Q14CZ7</id>
        <label>FASTKD3</label>
    </interactant>
    <organismsDiffer>false</organismsDiffer>
    <experiments>4</experiments>
</comment>
<comment type="interaction">
    <interactant intactId="EBI-10175124">
        <id>Q8IZU0</id>
    </interactant>
    <interactant intactId="EBI-1215612">
        <id>O94868</id>
        <label>FCHSD2</label>
    </interactant>
    <organismsDiffer>false</organismsDiffer>
    <experiments>4</experiments>
</comment>
<comment type="interaction">
    <interactant intactId="EBI-10175124">
        <id>Q8IZU0</id>
    </interactant>
    <interactant intactId="EBI-10183007">
        <id>Q96RJ6</id>
        <label>FERD3L</label>
    </interactant>
    <organismsDiffer>false</organismsDiffer>
    <experiments>4</experiments>
</comment>
<comment type="interaction">
    <interactant intactId="EBI-10175124">
        <id>Q8IZU0</id>
    </interactant>
    <interactant intactId="EBI-744935">
        <id>Q9BVV2</id>
        <label>FNDC11</label>
    </interactant>
    <organismsDiffer>false</organismsDiffer>
    <experiments>3</experiments>
</comment>
<comment type="interaction">
    <interactant intactId="EBI-10175124">
        <id>Q8IZU0</id>
    </interactant>
    <interactant intactId="EBI-8799578">
        <id>Q9NXC2</id>
        <label>GFOD1</label>
    </interactant>
    <organismsDiffer>false</organismsDiffer>
    <experiments>4</experiments>
</comment>
<comment type="interaction">
    <interactant intactId="EBI-10175124">
        <id>Q8IZU0</id>
    </interactant>
    <interactant intactId="EBI-11102276">
        <id>Q9HD26-2</id>
        <label>GOPC</label>
    </interactant>
    <organismsDiffer>false</organismsDiffer>
    <experiments>3</experiments>
</comment>
<comment type="interaction">
    <interactant intactId="EBI-10175124">
        <id>Q8IZU0</id>
    </interactant>
    <interactant intactId="EBI-10962409">
        <id>Q6IC98</id>
        <label>GRAMD4</label>
    </interactant>
    <organismsDiffer>false</organismsDiffer>
    <experiments>3</experiments>
</comment>
<comment type="interaction">
    <interactant intactId="EBI-10175124">
        <id>Q8IZU0</id>
    </interactant>
    <interactant intactId="EBI-1053767">
        <id>Q9Y2Q3</id>
        <label>GSTK1</label>
    </interactant>
    <organismsDiffer>false</organismsDiffer>
    <experiments>4</experiments>
</comment>
<comment type="interaction">
    <interactant intactId="EBI-10175124">
        <id>Q8IZU0</id>
    </interactant>
    <interactant intactId="EBI-10234807">
        <id>Q14CZ0</id>
        <label>HAPSTR1</label>
    </interactant>
    <organismsDiffer>false</organismsDiffer>
    <experiments>5</experiments>
</comment>
<comment type="interaction">
    <interactant intactId="EBI-10175124">
        <id>Q8IZU0</id>
    </interactant>
    <interactant intactId="EBI-18400392">
        <id>P21815</id>
        <label>IBSP</label>
    </interactant>
    <organismsDiffer>false</organismsDiffer>
    <experiments>3</experiments>
</comment>
<comment type="interaction">
    <interactant intactId="EBI-10175124">
        <id>Q8IZU0</id>
    </interactant>
    <interactant intactId="EBI-1047335">
        <id>Q9H1K1</id>
        <label>ISCU</label>
    </interactant>
    <organismsDiffer>false</organismsDiffer>
    <experiments>3</experiments>
</comment>
<comment type="interaction">
    <interactant intactId="EBI-10175124">
        <id>Q8IZU0</id>
    </interactant>
    <interactant intactId="EBI-11023753">
        <id>Q86VZ6</id>
        <label>JAZF1</label>
    </interactant>
    <organismsDiffer>false</organismsDiffer>
    <experiments>3</experiments>
</comment>
<comment type="interaction">
    <interactant intactId="EBI-10175124">
        <id>Q8IZU0</id>
    </interactant>
    <interactant intactId="EBI-20141748">
        <id>P52954</id>
        <label>LBX1</label>
    </interactant>
    <organismsDiffer>false</organismsDiffer>
    <experiments>3</experiments>
</comment>
<comment type="interaction">
    <interactant intactId="EBI-10175124">
        <id>Q8IZU0</id>
    </interactant>
    <interactant intactId="EBI-2513988">
        <id>O14910</id>
        <label>LIN7A</label>
    </interactant>
    <organismsDiffer>false</organismsDiffer>
    <experiments>3</experiments>
</comment>
<comment type="interaction">
    <interactant intactId="EBI-10175124">
        <id>Q8IZU0</id>
    </interactant>
    <interactant intactId="EBI-739832">
        <id>Q8TBB1</id>
        <label>LNX1</label>
    </interactant>
    <organismsDiffer>false</organismsDiffer>
    <experiments>3</experiments>
</comment>
<comment type="interaction">
    <interactant intactId="EBI-10175124">
        <id>Q8IZU0</id>
    </interactant>
    <interactant intactId="EBI-10313813">
        <id>Q9NU23</id>
        <label>LYRM2</label>
    </interactant>
    <organismsDiffer>false</organismsDiffer>
    <experiments>4</experiments>
</comment>
<comment type="interaction">
    <interactant intactId="EBI-10175124">
        <id>Q8IZU0</id>
    </interactant>
    <interactant intactId="EBI-10268010">
        <id>Q8N8X9</id>
        <label>MAB21L3</label>
    </interactant>
    <organismsDiffer>false</organismsDiffer>
    <experiments>3</experiments>
</comment>
<comment type="interaction">
    <interactant intactId="EBI-10175124">
        <id>Q8IZU0</id>
    </interactant>
    <interactant intactId="EBI-1048159">
        <id>P55081</id>
        <label>MFAP1</label>
    </interactant>
    <organismsDiffer>false</organismsDiffer>
    <experiments>3</experiments>
</comment>
<comment type="interaction">
    <interactant intactId="EBI-10175124">
        <id>Q8IZU0</id>
    </interactant>
    <interactant intactId="EBI-10270788">
        <id>Q8NEQ2</id>
        <label>MGC24125</label>
    </interactant>
    <organismsDiffer>false</organismsDiffer>
    <experiments>3</experiments>
</comment>
<comment type="interaction">
    <interactant intactId="EBI-10175124">
        <id>Q8IZU0</id>
    </interactant>
    <interactant intactId="EBI-748229">
        <id>Q9H8S9</id>
        <label>MOB1A</label>
    </interactant>
    <organismsDiffer>false</organismsDiffer>
    <experiments>3</experiments>
</comment>
<comment type="interaction">
    <interactant intactId="EBI-10175124">
        <id>Q8IZU0</id>
    </interactant>
    <interactant intactId="EBI-399246">
        <id>Q9UBU8</id>
        <label>MORF4L1</label>
    </interactant>
    <organismsDiffer>false</organismsDiffer>
    <experiments>3</experiments>
</comment>
<comment type="interaction">
    <interactant intactId="EBI-10175124">
        <id>Q8IZU0</id>
    </interactant>
    <interactant intactId="EBI-399257">
        <id>Q15014</id>
        <label>MORF4L2</label>
    </interactant>
    <organismsDiffer>false</organismsDiffer>
    <experiments>3</experiments>
</comment>
<comment type="interaction">
    <interactant intactId="EBI-10175124">
        <id>Q8IZU0</id>
    </interactant>
    <interactant intactId="EBI-723524">
        <id>Q7Z7H8</id>
        <label>MRPL10</label>
    </interactant>
    <organismsDiffer>false</organismsDiffer>
    <experiments>3</experiments>
</comment>
<comment type="interaction">
    <interactant intactId="EBI-10175124">
        <id>Q8IZU0</id>
    </interactant>
    <interactant intactId="EBI-723426">
        <id>Q13084</id>
        <label>MRPL28</label>
    </interactant>
    <organismsDiffer>false</organismsDiffer>
    <experiments>3</experiments>
</comment>
<comment type="interaction">
    <interactant intactId="EBI-10175124">
        <id>Q8IZU0</id>
    </interactant>
    <interactant intactId="EBI-726059">
        <id>Q9BYD2</id>
        <label>MRPL9</label>
    </interactant>
    <organismsDiffer>false</organismsDiffer>
    <experiments>3</experiments>
</comment>
<comment type="interaction">
    <interactant intactId="EBI-10175124">
        <id>Q8IZU0</id>
    </interactant>
    <interactant intactId="EBI-2855755">
        <id>Q96E11</id>
        <label>MRRF</label>
    </interactant>
    <organismsDiffer>false</organismsDiffer>
    <experiments>3</experiments>
</comment>
<comment type="interaction">
    <interactant intactId="EBI-10175124">
        <id>Q8IZU0</id>
    </interactant>
    <interactant intactId="EBI-709754">
        <id>Q9HB07</id>
        <label>MYG1</label>
    </interactant>
    <organismsDiffer>false</organismsDiffer>
    <experiments>4</experiments>
</comment>
<comment type="interaction">
    <interactant intactId="EBI-10175124">
        <id>Q8IZU0</id>
    </interactant>
    <interactant intactId="EBI-1246371">
        <id>O96000</id>
        <label>NDUFB10</label>
    </interactant>
    <organismsDiffer>false</organismsDiffer>
    <experiments>6</experiments>
</comment>
<comment type="interaction">
    <interactant intactId="EBI-10175124">
        <id>Q8IZU0</id>
    </interactant>
    <interactant intactId="EBI-2880203">
        <id>O76041</id>
        <label>NEBL</label>
    </interactant>
    <organismsDiffer>false</organismsDiffer>
    <experiments>3</experiments>
</comment>
<comment type="interaction">
    <interactant intactId="EBI-10175124">
        <id>Q8IZU0</id>
    </interactant>
    <interactant intactId="EBI-10190763">
        <id>O94818-2</id>
        <label>NOL4</label>
    </interactant>
    <organismsDiffer>false</organismsDiffer>
    <experiments>3</experiments>
</comment>
<comment type="interaction">
    <interactant intactId="EBI-10175124">
        <id>Q8IZU0</id>
    </interactant>
    <interactant intactId="EBI-17490746">
        <id>A8MTQ0</id>
        <label>NOTO</label>
    </interactant>
    <organismsDiffer>false</organismsDiffer>
    <experiments>3</experiments>
</comment>
<comment type="interaction">
    <interactant intactId="EBI-10175124">
        <id>Q8IZU0</id>
    </interactant>
    <interactant intactId="EBI-2559100">
        <id>O75459</id>
        <label>PAGE1</label>
    </interactant>
    <organismsDiffer>false</organismsDiffer>
    <experiments>3</experiments>
</comment>
<comment type="interaction">
    <interactant intactId="EBI-10175124">
        <id>Q8IZU0</id>
    </interactant>
    <interactant intactId="EBI-10244544">
        <id>Q5JUK9</id>
        <label>PAGE3</label>
    </interactant>
    <organismsDiffer>false</organismsDiffer>
    <experiments>3</experiments>
</comment>
<comment type="interaction">
    <interactant intactId="EBI-10175124">
        <id>Q8IZU0</id>
    </interactant>
    <interactant intactId="EBI-721853">
        <id>O14832</id>
        <label>PHYH</label>
    </interactant>
    <organismsDiffer>false</organismsDiffer>
    <experiments>7</experiments>
</comment>
<comment type="interaction">
    <interactant intactId="EBI-10175124">
        <id>Q8IZU0</id>
    </interactant>
    <interactant intactId="EBI-714599">
        <id>Q9Y237</id>
        <label>PIN4</label>
    </interactant>
    <organismsDiffer>false</organismsDiffer>
    <experiments>4</experiments>
</comment>
<comment type="interaction">
    <interactant intactId="EBI-10175124">
        <id>Q8IZU0</id>
    </interactant>
    <interactant intactId="EBI-10320765">
        <id>Q9UGP5-2</id>
        <label>POLL</label>
    </interactant>
    <organismsDiffer>false</organismsDiffer>
    <experiments>3</experiments>
</comment>
<comment type="interaction">
    <interactant intactId="EBI-10175124">
        <id>Q8IZU0</id>
    </interactant>
    <interactant intactId="EBI-2557469">
        <id>Q6NYC8</id>
        <label>PPP1R18</label>
    </interactant>
    <organismsDiffer>false</organismsDiffer>
    <experiments>3</experiments>
</comment>
<comment type="interaction">
    <interactant intactId="EBI-10175124">
        <id>Q8IZU0</id>
    </interactant>
    <interactant intactId="EBI-744322">
        <id>O43395</id>
        <label>PRPF3</label>
    </interactant>
    <organismsDiffer>false</organismsDiffer>
    <experiments>9</experiments>
</comment>
<comment type="interaction">
    <interactant intactId="EBI-10175124">
        <id>Q8IZU0</id>
    </interactant>
    <interactant intactId="EBI-722193">
        <id>O00487</id>
        <label>PSMD14</label>
    </interactant>
    <organismsDiffer>false</organismsDiffer>
    <experiments>3</experiments>
</comment>
<comment type="interaction">
    <interactant intactId="EBI-10175124">
        <id>Q8IZU0</id>
    </interactant>
    <interactant intactId="EBI-2602515">
        <id>Q86Y79</id>
        <label>PTRH1</label>
    </interactant>
    <organismsDiffer>false</organismsDiffer>
    <experiments>3</experiments>
</comment>
<comment type="interaction">
    <interactant intactId="EBI-10175124">
        <id>Q8IZU0</id>
    </interactant>
    <interactant intactId="EBI-721615">
        <id>Q9H0T7</id>
        <label>RAB17</label>
    </interactant>
    <organismsDiffer>false</organismsDiffer>
    <experiments>3</experiments>
</comment>
<comment type="interaction">
    <interactant intactId="EBI-10175124">
        <id>Q8IZU0</id>
    </interactant>
    <interactant intactId="EBI-2824089">
        <id>O15315</id>
        <label>RAD51B</label>
    </interactant>
    <organismsDiffer>false</organismsDiffer>
    <experiments>3</experiments>
</comment>
<comment type="interaction">
    <interactant intactId="EBI-10175124">
        <id>Q8IZU0</id>
    </interactant>
    <interactant intactId="EBI-740272">
        <id>Q96I25</id>
        <label>RBM17</label>
    </interactant>
    <organismsDiffer>false</organismsDiffer>
    <experiments>3</experiments>
</comment>
<comment type="interaction">
    <interactant intactId="EBI-10175124">
        <id>Q8IZU0</id>
    </interactant>
    <interactant intactId="EBI-780319">
        <id>Q86U06</id>
        <label>RBM23</label>
    </interactant>
    <organismsDiffer>false</organismsDiffer>
    <experiments>3</experiments>
</comment>
<comment type="interaction">
    <interactant intactId="EBI-10175124">
        <id>Q8IZU0</id>
    </interactant>
    <interactant intactId="EBI-4401316">
        <id>Q9NWS8</id>
        <label>RMND1</label>
    </interactant>
    <organismsDiffer>false</organismsDiffer>
    <experiments>3</experiments>
</comment>
<comment type="interaction">
    <interactant intactId="EBI-10175124">
        <id>Q8IZU0</id>
    </interactant>
    <interactant intactId="EBI-373337">
        <id>O76064</id>
        <label>RNF8</label>
    </interactant>
    <organismsDiffer>false</organismsDiffer>
    <experiments>3</experiments>
</comment>
<comment type="interaction">
    <interactant intactId="EBI-10175124">
        <id>Q8IZU0</id>
    </interactant>
    <interactant intactId="EBI-358122">
        <id>P32969</id>
        <label>RPL9P9</label>
    </interactant>
    <organismsDiffer>false</organismsDiffer>
    <experiments>3</experiments>
</comment>
<comment type="interaction">
    <interactant intactId="EBI-10175124">
        <id>Q8IZU0</id>
    </interactant>
    <interactant intactId="EBI-749321">
        <id>Q9UHA3</id>
        <label>RSL24D1</label>
    </interactant>
    <organismsDiffer>false</organismsDiffer>
    <experiments>3</experiments>
</comment>
<comment type="interaction">
    <interactant intactId="EBI-10175124">
        <id>Q8IZU0</id>
    </interactant>
    <interactant intactId="EBI-2952709">
        <id>Q92622</id>
        <label>RUBCN</label>
    </interactant>
    <organismsDiffer>false</organismsDiffer>
    <experiments>3</experiments>
</comment>
<comment type="interaction">
    <interactant intactId="EBI-10175124">
        <id>Q8IZU0</id>
    </interactant>
    <interactant intactId="EBI-6257312">
        <id>Q9BVN2</id>
        <label>RUSC1</label>
    </interactant>
    <organismsDiffer>false</organismsDiffer>
    <experiments>5</experiments>
</comment>
<comment type="interaction">
    <interactant intactId="EBI-10175124">
        <id>Q8IZU0</id>
    </interactant>
    <interactant intactId="EBI-727004">
        <id>O00560</id>
        <label>SDCBP</label>
    </interactant>
    <organismsDiffer>false</organismsDiffer>
    <experiments>6</experiments>
</comment>
<comment type="interaction">
    <interactant intactId="EBI-10175124">
        <id>Q8IZU0</id>
    </interactant>
    <interactant intactId="EBI-742426">
        <id>Q9H190</id>
        <label>SDCBP2</label>
    </interactant>
    <organismsDiffer>false</organismsDiffer>
    <experiments>3</experiments>
</comment>
<comment type="interaction">
    <interactant intactId="EBI-10175124">
        <id>Q8IZU0</id>
    </interactant>
    <interactant intactId="EBI-10195168">
        <id>P07093</id>
        <label>SERPINE2</label>
    </interactant>
    <organismsDiffer>false</organismsDiffer>
    <experiments>3</experiments>
</comment>
<comment type="interaction">
    <interactant intactId="EBI-10175124">
        <id>Q8IZU0</id>
    </interactant>
    <interactant intactId="EBI-476295">
        <id>P31947</id>
        <label>SFN</label>
    </interactant>
    <organismsDiffer>false</organismsDiffer>
    <experiments>3</experiments>
</comment>
<comment type="interaction">
    <interactant intactId="EBI-10175124">
        <id>Q8IZU0</id>
    </interactant>
    <interactant intactId="EBI-7600166">
        <id>O15427</id>
        <label>SLC16A3</label>
    </interactant>
    <organismsDiffer>false</organismsDiffer>
    <experiments>3</experiments>
</comment>
<comment type="interaction">
    <interactant intactId="EBI-10175124">
        <id>Q8IZU0</id>
    </interactant>
    <interactant intactId="EBI-355293">
        <id>P03973</id>
        <label>SLPI</label>
    </interactant>
    <organismsDiffer>false</organismsDiffer>
    <experiments>6</experiments>
</comment>
<comment type="interaction">
    <interactant intactId="EBI-10175124">
        <id>Q8IZU0</id>
    </interactant>
    <interactant intactId="EBI-358436">
        <id>Q12824-2</id>
        <label>SMARCB1</label>
    </interactant>
    <organismsDiffer>false</organismsDiffer>
    <experiments>3</experiments>
</comment>
<comment type="interaction">
    <interactant intactId="EBI-10175124">
        <id>Q8IZU0</id>
    </interactant>
    <interactant intactId="EBI-395421">
        <id>Q16637</id>
        <label>SMN2</label>
    </interactant>
    <organismsDiffer>false</organismsDiffer>
    <experiments>8</experiments>
</comment>
<comment type="interaction">
    <interactant intactId="EBI-10175124">
        <id>Q8IZU0</id>
    </interactant>
    <interactant intactId="EBI-490676">
        <id>O95721</id>
        <label>SNAP29</label>
    </interactant>
    <organismsDiffer>false</organismsDiffer>
    <experiments>3</experiments>
</comment>
<comment type="interaction">
    <interactant intactId="EBI-10175124">
        <id>Q8IZU0</id>
    </interactant>
    <interactant intactId="EBI-10244848">
        <id>Q5SQN1</id>
        <label>SNAP47</label>
    </interactant>
    <organismsDiffer>false</organismsDiffer>
    <experiments>3</experiments>
</comment>
<comment type="interaction">
    <interactant intactId="EBI-10175124">
        <id>Q8IZU0</id>
    </interactant>
    <interactant intactId="EBI-744896">
        <id>Q7Z614</id>
        <label>SNX20</label>
    </interactant>
    <organismsDiffer>false</organismsDiffer>
    <experiments>4</experiments>
</comment>
<comment type="interaction">
    <interactant intactId="EBI-10175124">
        <id>Q8IZU0</id>
    </interactant>
    <interactant intactId="EBI-3867173">
        <id>A7MD48</id>
        <label>SRRM4</label>
    </interactant>
    <organismsDiffer>false</organismsDiffer>
    <experiments>3</experiments>
</comment>
<comment type="interaction">
    <interactant intactId="EBI-10175124">
        <id>Q8IZU0</id>
    </interactant>
    <interactant intactId="EBI-992580">
        <id>Q13188</id>
        <label>STK3</label>
    </interactant>
    <organismsDiffer>false</organismsDiffer>
    <experiments>3</experiments>
</comment>
<comment type="interaction">
    <interactant intactId="EBI-10175124">
        <id>Q8IZU0</id>
    </interactant>
    <interactant intactId="EBI-10176959">
        <id>E5KS60</id>
        <label>SUCLA2</label>
    </interactant>
    <organismsDiffer>false</organismsDiffer>
    <experiments>3</experiments>
</comment>
<comment type="interaction">
    <interactant intactId="EBI-10175124">
        <id>Q8IZU0</id>
    </interactant>
    <interactant intactId="EBI-2691252">
        <id>O75683</id>
        <label>SURF6</label>
    </interactant>
    <organismsDiffer>false</organismsDiffer>
    <experiments>3</experiments>
</comment>
<comment type="interaction">
    <interactant intactId="EBI-10175124">
        <id>Q8IZU0</id>
    </interactant>
    <interactant intactId="EBI-745392">
        <id>Q9BSW7</id>
        <label>SYT17</label>
    </interactant>
    <organismsDiffer>false</organismsDiffer>
    <experiments>4</experiments>
</comment>
<comment type="interaction">
    <interactant intactId="EBI-10175124">
        <id>Q8IZU0</id>
    </interactant>
    <interactant intactId="EBI-11899977">
        <id>Q3MII6</id>
        <label>TBC1D25</label>
    </interactant>
    <organismsDiffer>false</organismsDiffer>
    <experiments>3</experiments>
</comment>
<comment type="interaction">
    <interactant intactId="EBI-10175124">
        <id>Q8IZU0</id>
    </interactant>
    <interactant intactId="EBI-702328">
        <id>Q969Z0</id>
        <label>TBRG4</label>
    </interactant>
    <organismsDiffer>false</organismsDiffer>
    <experiments>3</experiments>
</comment>
<comment type="interaction">
    <interactant intactId="EBI-10175124">
        <id>Q8IZU0</id>
    </interactant>
    <interactant intactId="EBI-710310">
        <id>Q15560</id>
        <label>TCEA2</label>
    </interactant>
    <organismsDiffer>false</organismsDiffer>
    <experiments>3</experiments>
</comment>
<comment type="interaction">
    <interactant intactId="EBI-10175124">
        <id>Q8IZU0</id>
    </interactant>
    <interactant intactId="EBI-954696">
        <id>Q8N8B7</id>
        <label>TCEANC</label>
    </interactant>
    <organismsDiffer>false</organismsDiffer>
    <experiments>3</experiments>
</comment>
<comment type="interaction">
    <interactant intactId="EBI-10175124">
        <id>Q8IZU0</id>
    </interactant>
    <interactant intactId="EBI-10236573">
        <id>Q15582</id>
        <label>TGFBI</label>
    </interactant>
    <organismsDiffer>false</organismsDiffer>
    <experiments>3</experiments>
</comment>
<comment type="interaction">
    <interactant intactId="EBI-10175124">
        <id>Q8IZU0</id>
    </interactant>
    <interactant intactId="EBI-12147805">
        <id>Q6ZVM7-2</id>
        <label>TOM1L2</label>
    </interactant>
    <organismsDiffer>false</organismsDiffer>
    <experiments>5</experiments>
</comment>
<comment type="interaction">
    <interactant intactId="EBI-10175124">
        <id>Q8IZU0</id>
    </interactant>
    <interactant intactId="EBI-3197877">
        <id>Q9BVS5</id>
        <label>TRMT61B</label>
    </interactant>
    <organismsDiffer>false</organismsDiffer>
    <experiments>4</experiments>
</comment>
<comment type="interaction">
    <interactant intactId="EBI-10175124">
        <id>Q8IZU0</id>
    </interactant>
    <interactant intactId="EBI-346882">
        <id>Q99816</id>
        <label>TSG101</label>
    </interactant>
    <organismsDiffer>false</organismsDiffer>
    <experiments>3</experiments>
</comment>
<comment type="interaction">
    <interactant intactId="EBI-10175124">
        <id>Q8IZU0</id>
    </interactant>
    <interactant intactId="EBI-12261790">
        <id>A0A384ME17</id>
        <label>TUFM</label>
    </interactant>
    <organismsDiffer>false</organismsDiffer>
    <experiments>3</experiments>
</comment>
<comment type="interaction">
    <interactant intactId="EBI-10175124">
        <id>Q8IZU0</id>
    </interactant>
    <interactant intactId="EBI-359097">
        <id>P49411</id>
        <label>TUFM</label>
    </interactant>
    <organismsDiffer>false</organismsDiffer>
    <experiments>4</experiments>
</comment>
<comment type="interaction">
    <interactant intactId="EBI-10175124">
        <id>Q8IZU0</id>
    </interactant>
    <interactant intactId="EBI-2932492">
        <id>Q99757</id>
        <label>TXN2</label>
    </interactant>
    <organismsDiffer>false</organismsDiffer>
    <experiments>3</experiments>
</comment>
<comment type="interaction">
    <interactant intactId="EBI-10175124">
        <id>Q8IZU0</id>
    </interactant>
    <interactant intactId="EBI-2129763">
        <id>Q96LR5</id>
        <label>UBE2E2</label>
    </interactant>
    <organismsDiffer>false</organismsDiffer>
    <experiments>3</experiments>
</comment>
<comment type="interaction">
    <interactant intactId="EBI-10175124">
        <id>Q8IZU0</id>
    </interactant>
    <interactant intactId="EBI-10288943">
        <id>Q96HZ7</id>
        <label>URB1-AS1</label>
    </interactant>
    <organismsDiffer>false</organismsDiffer>
    <experiments>3</experiments>
</comment>
<comment type="interaction">
    <interactant intactId="EBI-10175124">
        <id>Q8IZU0</id>
    </interactant>
    <interactant intactId="EBI-717592">
        <id>Q13426</id>
        <label>XRCC4</label>
    </interactant>
    <organismsDiffer>false</organismsDiffer>
    <experiments>9</experiments>
</comment>
<comment type="interaction">
    <interactant intactId="EBI-10175124">
        <id>Q8IZU0</id>
    </interactant>
    <interactant intactId="EBI-1049286">
        <id>Q9Y2Z4</id>
        <label>YARS2</label>
    </interactant>
    <organismsDiffer>false</organismsDiffer>
    <experiments>3</experiments>
</comment>
<comment type="interaction">
    <interactant intactId="EBI-10175124">
        <id>Q8IZU0</id>
    </interactant>
    <interactant intactId="EBI-597063">
        <id>Q8TBK6</id>
        <label>ZCCHC10</label>
    </interactant>
    <organismsDiffer>false</organismsDiffer>
    <experiments>3</experiments>
</comment>
<comment type="interaction">
    <interactant intactId="EBI-10175124">
        <id>Q8IZU0</id>
    </interactant>
    <interactant intactId="EBI-3439227">
        <id>Q8N5A5</id>
        <label>ZGPAT</label>
    </interactant>
    <organismsDiffer>false</organismsDiffer>
    <experiments>3</experiments>
</comment>
<comment type="interaction">
    <interactant intactId="EBI-10175124">
        <id>Q8IZU0</id>
    </interactant>
    <interactant intactId="EBI-10183064">
        <id>Q8N5A5-2</id>
        <label>ZGPAT</label>
    </interactant>
    <organismsDiffer>false</organismsDiffer>
    <experiments>3</experiments>
</comment>
<comment type="interaction">
    <interactant intactId="EBI-10175124">
        <id>Q8IZU0</id>
    </interactant>
    <interactant intactId="EBI-2681830">
        <id>P51814</id>
        <label>ZNF41</label>
    </interactant>
    <organismsDiffer>false</organismsDiffer>
    <experiments>3</experiments>
</comment>
<comment type="interaction">
    <interactant intactId="EBI-10175124">
        <id>Q8IZU0</id>
    </interactant>
    <interactant intactId="EBI-12700258">
        <id>P51814-6</id>
        <label>ZNF41</label>
    </interactant>
    <organismsDiffer>false</organismsDiffer>
    <experiments>6</experiments>
</comment>
<comment type="interaction">
    <interactant intactId="EBI-10175124">
        <id>Q8IZU0</id>
    </interactant>
    <interactant intactId="EBI-720304">
        <id>Q86VK4</id>
        <label>ZNF410</label>
    </interactant>
    <organismsDiffer>false</organismsDiffer>
    <experiments>3</experiments>
</comment>
<comment type="interaction">
    <interactant intactId="EBI-10175124">
        <id>Q8IZU0</id>
    </interactant>
    <interactant intactId="EBI-749400">
        <id>Q8N184</id>
        <label>ZNF567</label>
    </interactant>
    <organismsDiffer>false</organismsDiffer>
    <experiments>3</experiments>
</comment>
<comment type="interaction">
    <interactant intactId="EBI-10175124">
        <id>Q8IZU0</id>
    </interactant>
    <interactant intactId="EBI-9675993">
        <id>Q8N883</id>
        <label>ZNF614</label>
    </interactant>
    <organismsDiffer>false</organismsDiffer>
    <experiments>3</experiments>
</comment>
<comment type="interaction">
    <interactant intactId="EBI-10175124">
        <id>Q8IZU0</id>
    </interactant>
    <interactant intactId="EBI-11975599">
        <id>Q9ULD5</id>
        <label>ZNF777</label>
    </interactant>
    <organismsDiffer>false</organismsDiffer>
    <experiments>4</experiments>
</comment>
<comment type="interaction">
    <interactant intactId="EBI-10175124">
        <id>Q8IZU0</id>
    </interactant>
    <interactant intactId="EBI-17234977">
        <id>A0A1U9X8X8</id>
    </interactant>
    <organismsDiffer>false</organismsDiffer>
    <experiments>3</experiments>
</comment>
<comment type="interaction">
    <interactant intactId="EBI-10175124">
        <id>Q8IZU0</id>
    </interactant>
    <interactant intactId="EBI-10249899">
        <id>Q9H614</id>
    </interactant>
    <organismsDiffer>false</organismsDiffer>
    <experiments>3</experiments>
</comment>
<comment type="subcellular location">
    <subcellularLocation>
        <location evidence="2 3">Nucleus</location>
    </subcellularLocation>
    <subcellularLocation>
        <location evidence="3">Cytoplasm</location>
    </subcellularLocation>
    <subcellularLocation>
        <location evidence="3">Chromosome</location>
    </subcellularLocation>
    <text evidence="3">In the testis, localizes to primary spermatocyte nuclei and Sertoli cell cytoplasm (PubMed:34507348). Colocalizes with the synaptonemal complex in primary spermatocytes (PubMed:34507348). In the ovary, expressed in follicle cell nuclei and diffusely dispersed in the granular cell cytoplasm (PubMed:34507348).</text>
</comment>
<comment type="alternative products">
    <event type="alternative splicing"/>
    <isoform>
        <id>Q8IZU0-1</id>
        <name>1</name>
        <sequence type="displayed"/>
    </isoform>
    <isoform>
        <id>Q8IZU0-2</id>
        <name>2</name>
        <sequence type="described" ref="VSP_055087 VSP_055088"/>
    </isoform>
</comment>
<comment type="tissue specificity">
    <text evidence="3">Expressed in testis and ovary (at protein level).</text>
</comment>
<comment type="developmental stage">
    <text evidence="3">Expression decreases gradually in the spermatocyte nucleus during meiosis I.</text>
</comment>
<comment type="similarity">
    <text evidence="5">Belongs to the XLR/SYCP3 family.</text>
</comment>
<feature type="chain" id="PRO_0000119033" description="Protein FAM9B">
    <location>
        <begin position="1"/>
        <end position="186"/>
    </location>
</feature>
<feature type="region of interest" description="Disordered" evidence="1">
    <location>
        <begin position="1"/>
        <end position="93"/>
    </location>
</feature>
<feature type="compositionally biased region" description="Basic and acidic residues" evidence="1">
    <location>
        <begin position="10"/>
        <end position="27"/>
    </location>
</feature>
<feature type="compositionally biased region" description="Basic and acidic residues" evidence="1">
    <location>
        <begin position="34"/>
        <end position="58"/>
    </location>
</feature>
<feature type="compositionally biased region" description="Basic residues" evidence="1">
    <location>
        <begin position="66"/>
        <end position="93"/>
    </location>
</feature>
<feature type="splice variant" id="VSP_055087" description="In isoform 2." evidence="4">
    <original>M</original>
    <variation>MPGFLSFLSVSLRSPGSGIASSFPGQPATDPVGRRAAKAQLEAQFM</variation>
    <location>
        <position position="1"/>
    </location>
</feature>
<feature type="splice variant" id="VSP_055088" description="In isoform 2." evidence="4">
    <original>EDLTAKRKRMKMDKTCSKTKNKSKHALRKKQLK</original>
    <variation>VGANNFKNYPVHIGVSSEQHILLDCSLS</variation>
    <location>
        <begin position="61"/>
        <end position="93"/>
    </location>
</feature>
<evidence type="ECO:0000256" key="1">
    <source>
        <dbReference type="SAM" id="MobiDB-lite"/>
    </source>
</evidence>
<evidence type="ECO:0000269" key="2">
    <source>
    </source>
</evidence>
<evidence type="ECO:0000269" key="3">
    <source>
    </source>
</evidence>
<evidence type="ECO:0000303" key="4">
    <source>
    </source>
</evidence>
<evidence type="ECO:0000305" key="5"/>
<evidence type="ECO:0000312" key="6">
    <source>
        <dbReference type="HGNC" id="HGNC:18404"/>
    </source>
</evidence>
<gene>
    <name evidence="6" type="primary">FAM9B</name>
    <name evidence="6" type="synonym">TEX39B</name>
</gene>
<name>FAM9B_HUMAN</name>
<sequence>MAAWGKKHAGKDPVRDECEERNRFTETREEDVTDEHGEREPFAETDEHTGANTKKPEDTAEDLTAKRKRMKMDKTCSKTKNKSKHALRKKQLKRQKRDYIHSLKLLNVLEEYITDEQKEEEEEEGEEEELIRIFQEQQKKWQQYRSVRRERLKEMKLLRDQFVKALEDFEDLCDRVFSDEDSELDN</sequence>
<protein>
    <recommendedName>
        <fullName>Protein FAM9B</fullName>
    </recommendedName>
</protein>